<evidence type="ECO:0000255" key="1">
    <source>
        <dbReference type="HAMAP-Rule" id="MF_01220"/>
    </source>
</evidence>
<dbReference type="EC" id="2.7.4.22" evidence="1"/>
<dbReference type="EMBL" id="CP000672">
    <property type="protein sequence ID" value="ABR00597.1"/>
    <property type="molecule type" value="Genomic_DNA"/>
</dbReference>
<dbReference type="SMR" id="A5UIJ1"/>
<dbReference type="KEGG" id="hiq:CGSHiGG_08955"/>
<dbReference type="HOGENOM" id="CLU_033861_0_0_6"/>
<dbReference type="UniPathway" id="UPA00159">
    <property type="reaction ID" value="UER00275"/>
</dbReference>
<dbReference type="Proteomes" id="UP000001990">
    <property type="component" value="Chromosome"/>
</dbReference>
<dbReference type="GO" id="GO:0005829">
    <property type="term" value="C:cytosol"/>
    <property type="evidence" value="ECO:0007669"/>
    <property type="project" value="TreeGrafter"/>
</dbReference>
<dbReference type="GO" id="GO:0005524">
    <property type="term" value="F:ATP binding"/>
    <property type="evidence" value="ECO:0007669"/>
    <property type="project" value="UniProtKB-KW"/>
</dbReference>
<dbReference type="GO" id="GO:0033862">
    <property type="term" value="F:UMP kinase activity"/>
    <property type="evidence" value="ECO:0007669"/>
    <property type="project" value="UniProtKB-EC"/>
</dbReference>
<dbReference type="GO" id="GO:0044210">
    <property type="term" value="P:'de novo' CTP biosynthetic process"/>
    <property type="evidence" value="ECO:0007669"/>
    <property type="project" value="UniProtKB-UniRule"/>
</dbReference>
<dbReference type="GO" id="GO:0006225">
    <property type="term" value="P:UDP biosynthetic process"/>
    <property type="evidence" value="ECO:0007669"/>
    <property type="project" value="TreeGrafter"/>
</dbReference>
<dbReference type="CDD" id="cd04254">
    <property type="entry name" value="AAK_UMPK-PyrH-Ec"/>
    <property type="match status" value="1"/>
</dbReference>
<dbReference type="FunFam" id="3.40.1160.10:FF:000001">
    <property type="entry name" value="Uridylate kinase"/>
    <property type="match status" value="1"/>
</dbReference>
<dbReference type="Gene3D" id="3.40.1160.10">
    <property type="entry name" value="Acetylglutamate kinase-like"/>
    <property type="match status" value="1"/>
</dbReference>
<dbReference type="HAMAP" id="MF_01220_B">
    <property type="entry name" value="PyrH_B"/>
    <property type="match status" value="1"/>
</dbReference>
<dbReference type="InterPro" id="IPR036393">
    <property type="entry name" value="AceGlu_kinase-like_sf"/>
</dbReference>
<dbReference type="InterPro" id="IPR001048">
    <property type="entry name" value="Asp/Glu/Uridylate_kinase"/>
</dbReference>
<dbReference type="InterPro" id="IPR011817">
    <property type="entry name" value="Uridylate_kinase"/>
</dbReference>
<dbReference type="InterPro" id="IPR015963">
    <property type="entry name" value="Uridylate_kinase_bac"/>
</dbReference>
<dbReference type="NCBIfam" id="TIGR02075">
    <property type="entry name" value="pyrH_bact"/>
    <property type="match status" value="1"/>
</dbReference>
<dbReference type="PANTHER" id="PTHR42833">
    <property type="entry name" value="URIDYLATE KINASE"/>
    <property type="match status" value="1"/>
</dbReference>
<dbReference type="PANTHER" id="PTHR42833:SF4">
    <property type="entry name" value="URIDYLATE KINASE PUMPKIN, CHLOROPLASTIC"/>
    <property type="match status" value="1"/>
</dbReference>
<dbReference type="Pfam" id="PF00696">
    <property type="entry name" value="AA_kinase"/>
    <property type="match status" value="1"/>
</dbReference>
<dbReference type="PIRSF" id="PIRSF005650">
    <property type="entry name" value="Uridylate_kin"/>
    <property type="match status" value="1"/>
</dbReference>
<dbReference type="SUPFAM" id="SSF53633">
    <property type="entry name" value="Carbamate kinase-like"/>
    <property type="match status" value="1"/>
</dbReference>
<name>PYRH_HAEIG</name>
<gene>
    <name evidence="1" type="primary">pyrH</name>
    <name type="ordered locus">CGSHiGG_08955</name>
</gene>
<proteinExistence type="inferred from homology"/>
<feature type="chain" id="PRO_1000053930" description="Uridylate kinase">
    <location>
        <begin position="1"/>
        <end position="237"/>
    </location>
</feature>
<feature type="region of interest" description="Involved in allosteric activation by GTP" evidence="1">
    <location>
        <begin position="20"/>
        <end position="25"/>
    </location>
</feature>
<feature type="binding site" evidence="1">
    <location>
        <begin position="12"/>
        <end position="15"/>
    </location>
    <ligand>
        <name>ATP</name>
        <dbReference type="ChEBI" id="CHEBI:30616"/>
    </ligand>
</feature>
<feature type="binding site" evidence="1">
    <location>
        <position position="54"/>
    </location>
    <ligand>
        <name>UMP</name>
        <dbReference type="ChEBI" id="CHEBI:57865"/>
    </ligand>
</feature>
<feature type="binding site" evidence="1">
    <location>
        <position position="55"/>
    </location>
    <ligand>
        <name>ATP</name>
        <dbReference type="ChEBI" id="CHEBI:30616"/>
    </ligand>
</feature>
<feature type="binding site" evidence="1">
    <location>
        <position position="59"/>
    </location>
    <ligand>
        <name>ATP</name>
        <dbReference type="ChEBI" id="CHEBI:30616"/>
    </ligand>
</feature>
<feature type="binding site" evidence="1">
    <location>
        <position position="74"/>
    </location>
    <ligand>
        <name>UMP</name>
        <dbReference type="ChEBI" id="CHEBI:57865"/>
    </ligand>
</feature>
<feature type="binding site" evidence="1">
    <location>
        <begin position="135"/>
        <end position="142"/>
    </location>
    <ligand>
        <name>UMP</name>
        <dbReference type="ChEBI" id="CHEBI:57865"/>
    </ligand>
</feature>
<feature type="binding site" evidence="1">
    <location>
        <position position="162"/>
    </location>
    <ligand>
        <name>ATP</name>
        <dbReference type="ChEBI" id="CHEBI:30616"/>
    </ligand>
</feature>
<feature type="binding site" evidence="1">
    <location>
        <position position="168"/>
    </location>
    <ligand>
        <name>ATP</name>
        <dbReference type="ChEBI" id="CHEBI:30616"/>
    </ligand>
</feature>
<feature type="binding site" evidence="1">
    <location>
        <position position="171"/>
    </location>
    <ligand>
        <name>ATP</name>
        <dbReference type="ChEBI" id="CHEBI:30616"/>
    </ligand>
</feature>
<sequence length="237" mass="25710">MSQPIYKRILLKLSGEALQGEDGLGIDPAILDRMAVEIKELVEMGVEVGVVLGGGNLFRGAKLAKAGMNRVVGDHMGMLATVMNGLAMRDSLFRADVNAKLMSAFQLNGICDTYNWSEAIKMLREKRVVIFSAGTGNPFFTTDSTACLRGIEIEADVVLKATKVDGVYDCDPAKNPDAKLYKNLTYAEVIDKELQVMDLSAFTLARDHGMPIRVFNMGKPGALRQVVTGTEEGTTIC</sequence>
<keyword id="KW-0021">Allosteric enzyme</keyword>
<keyword id="KW-0067">ATP-binding</keyword>
<keyword id="KW-0963">Cytoplasm</keyword>
<keyword id="KW-0418">Kinase</keyword>
<keyword id="KW-0547">Nucleotide-binding</keyword>
<keyword id="KW-0665">Pyrimidine biosynthesis</keyword>
<keyword id="KW-0808">Transferase</keyword>
<organism>
    <name type="scientific">Haemophilus influenzae (strain PittGG)</name>
    <dbReference type="NCBI Taxonomy" id="374931"/>
    <lineage>
        <taxon>Bacteria</taxon>
        <taxon>Pseudomonadati</taxon>
        <taxon>Pseudomonadota</taxon>
        <taxon>Gammaproteobacteria</taxon>
        <taxon>Pasteurellales</taxon>
        <taxon>Pasteurellaceae</taxon>
        <taxon>Haemophilus</taxon>
    </lineage>
</organism>
<protein>
    <recommendedName>
        <fullName evidence="1">Uridylate kinase</fullName>
        <shortName evidence="1">UK</shortName>
        <ecNumber evidence="1">2.7.4.22</ecNumber>
    </recommendedName>
    <alternativeName>
        <fullName evidence="1">Uridine monophosphate kinase</fullName>
        <shortName evidence="1">UMP kinase</shortName>
        <shortName evidence="1">UMPK</shortName>
    </alternativeName>
</protein>
<accession>A5UIJ1</accession>
<reference key="1">
    <citation type="journal article" date="2007" name="Genome Biol.">
        <title>Characterization and modeling of the Haemophilus influenzae core and supragenomes based on the complete genomic sequences of Rd and 12 clinical nontypeable strains.</title>
        <authorList>
            <person name="Hogg J.S."/>
            <person name="Hu F.Z."/>
            <person name="Janto B."/>
            <person name="Boissy R."/>
            <person name="Hayes J."/>
            <person name="Keefe R."/>
            <person name="Post J.C."/>
            <person name="Ehrlich G.D."/>
        </authorList>
    </citation>
    <scope>NUCLEOTIDE SEQUENCE [LARGE SCALE GENOMIC DNA]</scope>
    <source>
        <strain>PittGG</strain>
    </source>
</reference>
<comment type="function">
    <text evidence="1">Catalyzes the reversible phosphorylation of UMP to UDP.</text>
</comment>
<comment type="catalytic activity">
    <reaction evidence="1">
        <text>UMP + ATP = UDP + ADP</text>
        <dbReference type="Rhea" id="RHEA:24400"/>
        <dbReference type="ChEBI" id="CHEBI:30616"/>
        <dbReference type="ChEBI" id="CHEBI:57865"/>
        <dbReference type="ChEBI" id="CHEBI:58223"/>
        <dbReference type="ChEBI" id="CHEBI:456216"/>
        <dbReference type="EC" id="2.7.4.22"/>
    </reaction>
</comment>
<comment type="activity regulation">
    <text evidence="1">Allosterically activated by GTP. Inhibited by UTP.</text>
</comment>
<comment type="pathway">
    <text evidence="1">Pyrimidine metabolism; CTP biosynthesis via de novo pathway; UDP from UMP (UMPK route): step 1/1.</text>
</comment>
<comment type="subunit">
    <text evidence="1">Homohexamer.</text>
</comment>
<comment type="subcellular location">
    <subcellularLocation>
        <location evidence="1">Cytoplasm</location>
    </subcellularLocation>
</comment>
<comment type="similarity">
    <text evidence="1">Belongs to the UMP kinase family.</text>
</comment>